<dbReference type="EMBL" id="CP001120">
    <property type="protein sequence ID" value="ACF67166.1"/>
    <property type="molecule type" value="Genomic_DNA"/>
</dbReference>
<dbReference type="RefSeq" id="WP_000059093.1">
    <property type="nucleotide sequence ID" value="NC_011083.1"/>
</dbReference>
<dbReference type="SMR" id="B4TAU9"/>
<dbReference type="KEGG" id="seh:SeHA_C4172"/>
<dbReference type="HOGENOM" id="CLU_026910_0_1_6"/>
<dbReference type="Proteomes" id="UP000001866">
    <property type="component" value="Chromosome"/>
</dbReference>
<dbReference type="GO" id="GO:0005737">
    <property type="term" value="C:cytoplasm"/>
    <property type="evidence" value="ECO:0007669"/>
    <property type="project" value="UniProtKB-SubCell"/>
</dbReference>
<dbReference type="GO" id="GO:0005886">
    <property type="term" value="C:plasma membrane"/>
    <property type="evidence" value="ECO:0007669"/>
    <property type="project" value="TreeGrafter"/>
</dbReference>
<dbReference type="GO" id="GO:0005524">
    <property type="term" value="F:ATP binding"/>
    <property type="evidence" value="ECO:0007669"/>
    <property type="project" value="UniProtKB-UniRule"/>
</dbReference>
<dbReference type="GO" id="GO:0016887">
    <property type="term" value="F:ATP hydrolysis activity"/>
    <property type="evidence" value="ECO:0007669"/>
    <property type="project" value="InterPro"/>
</dbReference>
<dbReference type="GO" id="GO:0003688">
    <property type="term" value="F:DNA replication origin binding"/>
    <property type="evidence" value="ECO:0007669"/>
    <property type="project" value="UniProtKB-UniRule"/>
</dbReference>
<dbReference type="GO" id="GO:0008289">
    <property type="term" value="F:lipid binding"/>
    <property type="evidence" value="ECO:0007669"/>
    <property type="project" value="UniProtKB-KW"/>
</dbReference>
<dbReference type="GO" id="GO:0006270">
    <property type="term" value="P:DNA replication initiation"/>
    <property type="evidence" value="ECO:0007669"/>
    <property type="project" value="UniProtKB-UniRule"/>
</dbReference>
<dbReference type="GO" id="GO:0006275">
    <property type="term" value="P:regulation of DNA replication"/>
    <property type="evidence" value="ECO:0007669"/>
    <property type="project" value="UniProtKB-UniRule"/>
</dbReference>
<dbReference type="CDD" id="cd00009">
    <property type="entry name" value="AAA"/>
    <property type="match status" value="1"/>
</dbReference>
<dbReference type="CDD" id="cd06571">
    <property type="entry name" value="Bac_DnaA_C"/>
    <property type="match status" value="1"/>
</dbReference>
<dbReference type="FunFam" id="1.10.1750.10:FF:000001">
    <property type="entry name" value="Chromosomal replication initiator protein DnaA"/>
    <property type="match status" value="1"/>
</dbReference>
<dbReference type="FunFam" id="1.10.8.60:FF:000003">
    <property type="entry name" value="Chromosomal replication initiator protein DnaA"/>
    <property type="match status" value="1"/>
</dbReference>
<dbReference type="FunFam" id="3.30.300.180:FF:000001">
    <property type="entry name" value="Chromosomal replication initiator protein DnaA"/>
    <property type="match status" value="1"/>
</dbReference>
<dbReference type="FunFam" id="3.40.50.300:FF:000103">
    <property type="entry name" value="Chromosomal replication initiator protein DnaA"/>
    <property type="match status" value="1"/>
</dbReference>
<dbReference type="Gene3D" id="1.10.1750.10">
    <property type="match status" value="1"/>
</dbReference>
<dbReference type="Gene3D" id="1.10.8.60">
    <property type="match status" value="1"/>
</dbReference>
<dbReference type="Gene3D" id="3.30.300.180">
    <property type="match status" value="1"/>
</dbReference>
<dbReference type="Gene3D" id="3.40.50.300">
    <property type="entry name" value="P-loop containing nucleotide triphosphate hydrolases"/>
    <property type="match status" value="1"/>
</dbReference>
<dbReference type="HAMAP" id="MF_00377">
    <property type="entry name" value="DnaA_bact"/>
    <property type="match status" value="1"/>
</dbReference>
<dbReference type="InterPro" id="IPR003593">
    <property type="entry name" value="AAA+_ATPase"/>
</dbReference>
<dbReference type="InterPro" id="IPR001957">
    <property type="entry name" value="Chromosome_initiator_DnaA"/>
</dbReference>
<dbReference type="InterPro" id="IPR020591">
    <property type="entry name" value="Chromosome_initiator_DnaA-like"/>
</dbReference>
<dbReference type="InterPro" id="IPR018312">
    <property type="entry name" value="Chromosome_initiator_DnaA_CS"/>
</dbReference>
<dbReference type="InterPro" id="IPR013159">
    <property type="entry name" value="DnaA_C"/>
</dbReference>
<dbReference type="InterPro" id="IPR013317">
    <property type="entry name" value="DnaA_dom"/>
</dbReference>
<dbReference type="InterPro" id="IPR024633">
    <property type="entry name" value="DnaA_N_dom"/>
</dbReference>
<dbReference type="InterPro" id="IPR038454">
    <property type="entry name" value="DnaA_N_sf"/>
</dbReference>
<dbReference type="InterPro" id="IPR027417">
    <property type="entry name" value="P-loop_NTPase"/>
</dbReference>
<dbReference type="InterPro" id="IPR010921">
    <property type="entry name" value="Trp_repressor/repl_initiator"/>
</dbReference>
<dbReference type="NCBIfam" id="TIGR00362">
    <property type="entry name" value="DnaA"/>
    <property type="match status" value="1"/>
</dbReference>
<dbReference type="PANTHER" id="PTHR30050">
    <property type="entry name" value="CHROMOSOMAL REPLICATION INITIATOR PROTEIN DNAA"/>
    <property type="match status" value="1"/>
</dbReference>
<dbReference type="PANTHER" id="PTHR30050:SF2">
    <property type="entry name" value="CHROMOSOMAL REPLICATION INITIATOR PROTEIN DNAA"/>
    <property type="match status" value="1"/>
</dbReference>
<dbReference type="Pfam" id="PF00308">
    <property type="entry name" value="Bac_DnaA"/>
    <property type="match status" value="1"/>
</dbReference>
<dbReference type="Pfam" id="PF08299">
    <property type="entry name" value="Bac_DnaA_C"/>
    <property type="match status" value="1"/>
</dbReference>
<dbReference type="Pfam" id="PF11638">
    <property type="entry name" value="DnaA_N"/>
    <property type="match status" value="1"/>
</dbReference>
<dbReference type="PRINTS" id="PR00051">
    <property type="entry name" value="DNAA"/>
</dbReference>
<dbReference type="SMART" id="SM00382">
    <property type="entry name" value="AAA"/>
    <property type="match status" value="1"/>
</dbReference>
<dbReference type="SMART" id="SM00760">
    <property type="entry name" value="Bac_DnaA_C"/>
    <property type="match status" value="1"/>
</dbReference>
<dbReference type="SUPFAM" id="SSF52540">
    <property type="entry name" value="P-loop containing nucleoside triphosphate hydrolases"/>
    <property type="match status" value="1"/>
</dbReference>
<dbReference type="SUPFAM" id="SSF48295">
    <property type="entry name" value="TrpR-like"/>
    <property type="match status" value="1"/>
</dbReference>
<dbReference type="PROSITE" id="PS01008">
    <property type="entry name" value="DNAA"/>
    <property type="match status" value="1"/>
</dbReference>
<comment type="function">
    <text evidence="1">Plays an essential role in the initiation and regulation of chromosomal replication. ATP-DnaA binds to the origin of replication (oriC) to initiate formation of the DNA replication initiation complex once per cell cycle. Binds the DnaA box (a 9 base pair repeat at the origin) and separates the double-stranded (ds)DNA. Forms a right-handed helical filament on oriC DNA; dsDNA binds to the exterior of the filament while single-stranded (ss)DNA is stabiized in the filament's interior. The ATP-DnaA-oriC complex binds and stabilizes one strand of the AT-rich DNA unwinding element (DUE), permitting loading of DNA polymerase. After initiation quickly degrades to an ADP-DnaA complex that is not apt for DNA replication. Binds acidic phospholipids.</text>
</comment>
<comment type="subunit">
    <text evidence="1">Oligomerizes as a right-handed, spiral filament on DNA at oriC.</text>
</comment>
<comment type="subcellular location">
    <subcellularLocation>
        <location evidence="1">Cytoplasm</location>
    </subcellularLocation>
</comment>
<comment type="domain">
    <text evidence="1">Domain I is involved in oligomerization and binding regulators, domain II is flexibile and of varying length in different bacteria, domain III forms the AAA+ region, while domain IV binds dsDNA.</text>
</comment>
<comment type="similarity">
    <text evidence="1">Belongs to the DnaA family.</text>
</comment>
<keyword id="KW-0067">ATP-binding</keyword>
<keyword id="KW-0963">Cytoplasm</keyword>
<keyword id="KW-0235">DNA replication</keyword>
<keyword id="KW-0238">DNA-binding</keyword>
<keyword id="KW-0446">Lipid-binding</keyword>
<keyword id="KW-0547">Nucleotide-binding</keyword>
<name>DNAA_SALHS</name>
<protein>
    <recommendedName>
        <fullName evidence="1">Chromosomal replication initiator protein DnaA</fullName>
    </recommendedName>
</protein>
<organism>
    <name type="scientific">Salmonella heidelberg (strain SL476)</name>
    <dbReference type="NCBI Taxonomy" id="454169"/>
    <lineage>
        <taxon>Bacteria</taxon>
        <taxon>Pseudomonadati</taxon>
        <taxon>Pseudomonadota</taxon>
        <taxon>Gammaproteobacteria</taxon>
        <taxon>Enterobacterales</taxon>
        <taxon>Enterobacteriaceae</taxon>
        <taxon>Salmonella</taxon>
    </lineage>
</organism>
<accession>B4TAU9</accession>
<proteinExistence type="inferred from homology"/>
<reference key="1">
    <citation type="journal article" date="2011" name="J. Bacteriol.">
        <title>Comparative genomics of 28 Salmonella enterica isolates: evidence for CRISPR-mediated adaptive sublineage evolution.</title>
        <authorList>
            <person name="Fricke W.F."/>
            <person name="Mammel M.K."/>
            <person name="McDermott P.F."/>
            <person name="Tartera C."/>
            <person name="White D.G."/>
            <person name="Leclerc J.E."/>
            <person name="Ravel J."/>
            <person name="Cebula T.A."/>
        </authorList>
    </citation>
    <scope>NUCLEOTIDE SEQUENCE [LARGE SCALE GENOMIC DNA]</scope>
    <source>
        <strain>SL476</strain>
    </source>
</reference>
<feature type="chain" id="PRO_1000122012" description="Chromosomal replication initiator protein DnaA">
    <location>
        <begin position="1"/>
        <end position="466"/>
    </location>
</feature>
<feature type="region of interest" description="Domain I, interacts with DnaA modulators" evidence="1">
    <location>
        <begin position="1"/>
        <end position="86"/>
    </location>
</feature>
<feature type="region of interest" description="Domain II" evidence="1">
    <location>
        <begin position="86"/>
        <end position="129"/>
    </location>
</feature>
<feature type="region of interest" description="Domain III, AAA+ region" evidence="1">
    <location>
        <begin position="130"/>
        <end position="346"/>
    </location>
</feature>
<feature type="region of interest" description="Domain IV, binds dsDNA" evidence="1">
    <location>
        <begin position="347"/>
        <end position="466"/>
    </location>
</feature>
<feature type="binding site" evidence="1">
    <location>
        <position position="174"/>
    </location>
    <ligand>
        <name>ATP</name>
        <dbReference type="ChEBI" id="CHEBI:30616"/>
    </ligand>
</feature>
<feature type="binding site" evidence="1">
    <location>
        <position position="176"/>
    </location>
    <ligand>
        <name>ATP</name>
        <dbReference type="ChEBI" id="CHEBI:30616"/>
    </ligand>
</feature>
<feature type="binding site" evidence="1">
    <location>
        <position position="177"/>
    </location>
    <ligand>
        <name>ATP</name>
        <dbReference type="ChEBI" id="CHEBI:30616"/>
    </ligand>
</feature>
<feature type="binding site" evidence="1">
    <location>
        <position position="178"/>
    </location>
    <ligand>
        <name>ATP</name>
        <dbReference type="ChEBI" id="CHEBI:30616"/>
    </ligand>
</feature>
<evidence type="ECO:0000255" key="1">
    <source>
        <dbReference type="HAMAP-Rule" id="MF_00377"/>
    </source>
</evidence>
<sequence>MSLSLWQQCLARLQDELPATEFSMWIRPLQAELSDNTLALYAPNRFVLDWVRDKYLNNINGLLNTFCGADAPQLRFEVGTKPVTQTLKTPVHNVVAPAQTTTAQPQRVAPAARSGWDNVPAPAEPTYRSNVNVKHTFDNFVEGKSNQLARAAARQVADNPGGAYNPLFLYGGTGLGKTHLLHAVGNGIMARKPNAKVVYMHSERFVQDMVKALQNNAIEEFKRYYRSVDALLIDDIQFFANKERSQEEFFHTFNALLEGNQQIILTSDRYPKEINGVEDRLKSRFGWGLTVAIEPPELETRVAILMKKADENDIRLPGEVAFFIAKRLRSNVRELEGALNRVIANANFTGRAITIDFVREALRDLLALQEKLVTIDNIQKTVAEYYKIKIADLLSKRRSRSVARPRQMAMALAKELTNHSLPEIGDAFGGRDHTTVLHACRKIEQLREESHDIKEDFSNLIRTLSS</sequence>
<gene>
    <name evidence="1" type="primary">dnaA</name>
    <name type="ordered locus">SeHA_C4172</name>
</gene>